<comment type="similarity">
    <text evidence="1">Belongs to the bacterial ribosomal protein bL32 family.</text>
</comment>
<comment type="sequence caution" evidence="2">
    <conflict type="erroneous initiation">
        <sequence resource="EMBL-CDS" id="ABO66348"/>
    </conflict>
</comment>
<gene>
    <name evidence="1" type="primary">rpmF</name>
    <name type="ordered locus">GTNG_0970</name>
</gene>
<dbReference type="EMBL" id="CP000557">
    <property type="protein sequence ID" value="ABO66348.1"/>
    <property type="status" value="ALT_INIT"/>
    <property type="molecule type" value="Genomic_DNA"/>
</dbReference>
<dbReference type="RefSeq" id="WP_011230605.1">
    <property type="nucleotide sequence ID" value="NC_009328.1"/>
</dbReference>
<dbReference type="SMR" id="A4ILZ4"/>
<dbReference type="GeneID" id="89611677"/>
<dbReference type="KEGG" id="gtn:GTNG_0970"/>
<dbReference type="eggNOG" id="COG0333">
    <property type="taxonomic scope" value="Bacteria"/>
</dbReference>
<dbReference type="HOGENOM" id="CLU_2193209_0_0_9"/>
<dbReference type="Proteomes" id="UP000001578">
    <property type="component" value="Chromosome"/>
</dbReference>
<dbReference type="GO" id="GO:0015934">
    <property type="term" value="C:large ribosomal subunit"/>
    <property type="evidence" value="ECO:0007669"/>
    <property type="project" value="InterPro"/>
</dbReference>
<dbReference type="GO" id="GO:0003735">
    <property type="term" value="F:structural constituent of ribosome"/>
    <property type="evidence" value="ECO:0007669"/>
    <property type="project" value="InterPro"/>
</dbReference>
<dbReference type="GO" id="GO:0006412">
    <property type="term" value="P:translation"/>
    <property type="evidence" value="ECO:0007669"/>
    <property type="project" value="UniProtKB-UniRule"/>
</dbReference>
<dbReference type="HAMAP" id="MF_00340">
    <property type="entry name" value="Ribosomal_bL32"/>
    <property type="match status" value="1"/>
</dbReference>
<dbReference type="InterPro" id="IPR002677">
    <property type="entry name" value="Ribosomal_bL32"/>
</dbReference>
<dbReference type="InterPro" id="IPR044957">
    <property type="entry name" value="Ribosomal_bL32_bact"/>
</dbReference>
<dbReference type="InterPro" id="IPR011332">
    <property type="entry name" value="Ribosomal_zn-bd"/>
</dbReference>
<dbReference type="NCBIfam" id="TIGR01031">
    <property type="entry name" value="rpmF_bact"/>
    <property type="match status" value="1"/>
</dbReference>
<dbReference type="PANTHER" id="PTHR35534">
    <property type="entry name" value="50S RIBOSOMAL PROTEIN L32"/>
    <property type="match status" value="1"/>
</dbReference>
<dbReference type="PANTHER" id="PTHR35534:SF2">
    <property type="entry name" value="LARGE RIBOSOMAL SUBUNIT PROTEIN BL32"/>
    <property type="match status" value="1"/>
</dbReference>
<dbReference type="Pfam" id="PF01783">
    <property type="entry name" value="Ribosomal_L32p"/>
    <property type="match status" value="1"/>
</dbReference>
<dbReference type="SUPFAM" id="SSF57829">
    <property type="entry name" value="Zn-binding ribosomal proteins"/>
    <property type="match status" value="1"/>
</dbReference>
<name>RL32_GEOTN</name>
<proteinExistence type="inferred from homology"/>
<organism>
    <name type="scientific">Geobacillus thermodenitrificans (strain NG80-2)</name>
    <dbReference type="NCBI Taxonomy" id="420246"/>
    <lineage>
        <taxon>Bacteria</taxon>
        <taxon>Bacillati</taxon>
        <taxon>Bacillota</taxon>
        <taxon>Bacilli</taxon>
        <taxon>Bacillales</taxon>
        <taxon>Anoxybacillaceae</taxon>
        <taxon>Geobacillus</taxon>
    </lineage>
</organism>
<evidence type="ECO:0000255" key="1">
    <source>
        <dbReference type="HAMAP-Rule" id="MF_00340"/>
    </source>
</evidence>
<evidence type="ECO:0000305" key="2"/>
<protein>
    <recommendedName>
        <fullName evidence="1">Large ribosomal subunit protein bL32</fullName>
    </recommendedName>
    <alternativeName>
        <fullName evidence="2">50S ribosomal protein L32</fullName>
    </alternativeName>
</protein>
<accession>A4ILZ4</accession>
<feature type="chain" id="PRO_0000296470" description="Large ribosomal subunit protein bL32">
    <location>
        <begin position="1"/>
        <end position="57"/>
    </location>
</feature>
<sequence length="57" mass="6645">MAVPFRRTSKTRKRLRRTHFKLQVPGMVQCPNCGEWKLAHRVCKACGTYKGRDVVNK</sequence>
<reference key="1">
    <citation type="journal article" date="2007" name="Proc. Natl. Acad. Sci. U.S.A.">
        <title>Genome and proteome of long-chain alkane degrading Geobacillus thermodenitrificans NG80-2 isolated from a deep-subsurface oil reservoir.</title>
        <authorList>
            <person name="Feng L."/>
            <person name="Wang W."/>
            <person name="Cheng J."/>
            <person name="Ren Y."/>
            <person name="Zhao G."/>
            <person name="Gao C."/>
            <person name="Tang Y."/>
            <person name="Liu X."/>
            <person name="Han W."/>
            <person name="Peng X."/>
            <person name="Liu R."/>
            <person name="Wang L."/>
        </authorList>
    </citation>
    <scope>NUCLEOTIDE SEQUENCE [LARGE SCALE GENOMIC DNA]</scope>
    <source>
        <strain>NG80-2</strain>
    </source>
</reference>
<keyword id="KW-0687">Ribonucleoprotein</keyword>
<keyword id="KW-0689">Ribosomal protein</keyword>